<comment type="function">
    <text evidence="3">Involved in morphogenesis. May be involved in cell wall organization and biogenesis.</text>
</comment>
<comment type="induction">
    <text evidence="4">Expression is regulated by the KAR4 transcription factor and reduced after pheromone induction.</text>
</comment>
<evidence type="ECO:0000255" key="1">
    <source>
        <dbReference type="PROSITE-ProRule" id="PRU00094"/>
    </source>
</evidence>
<evidence type="ECO:0000256" key="2">
    <source>
        <dbReference type="SAM" id="MobiDB-lite"/>
    </source>
</evidence>
<evidence type="ECO:0000269" key="3">
    <source>
    </source>
</evidence>
<evidence type="ECO:0000269" key="4">
    <source>
    </source>
</evidence>
<proteinExistence type="evidence at transcript level"/>
<protein>
    <recommendedName>
        <fullName>Protein ECM23</fullName>
    </recommendedName>
    <alternativeName>
        <fullName>Extracellular mutant protein 23</fullName>
    </alternativeName>
    <alternativeName>
        <fullName>SRD1 homolog 2</fullName>
    </alternativeName>
</protein>
<reference key="1">
    <citation type="journal article" date="1997" name="Nature">
        <title>The nucleotide sequence of Saccharomyces cerevisiae chromosome XVI.</title>
        <authorList>
            <person name="Bussey H."/>
            <person name="Storms R.K."/>
            <person name="Ahmed A."/>
            <person name="Albermann K."/>
            <person name="Allen E."/>
            <person name="Ansorge W."/>
            <person name="Araujo R."/>
            <person name="Aparicio A."/>
            <person name="Barrell B.G."/>
            <person name="Badcock K."/>
            <person name="Benes V."/>
            <person name="Botstein D."/>
            <person name="Bowman S."/>
            <person name="Brueckner M."/>
            <person name="Carpenter J."/>
            <person name="Cherry J.M."/>
            <person name="Chung E."/>
            <person name="Churcher C.M."/>
            <person name="Coster F."/>
            <person name="Davis K."/>
            <person name="Davis R.W."/>
            <person name="Dietrich F.S."/>
            <person name="Delius H."/>
            <person name="DiPaolo T."/>
            <person name="Dubois E."/>
            <person name="Duesterhoeft A."/>
            <person name="Duncan M."/>
            <person name="Floeth M."/>
            <person name="Fortin N."/>
            <person name="Friesen J.D."/>
            <person name="Fritz C."/>
            <person name="Goffeau A."/>
            <person name="Hall J."/>
            <person name="Hebling U."/>
            <person name="Heumann K."/>
            <person name="Hilbert H."/>
            <person name="Hillier L.W."/>
            <person name="Hunicke-Smith S."/>
            <person name="Hyman R.W."/>
            <person name="Johnston M."/>
            <person name="Kalman S."/>
            <person name="Kleine K."/>
            <person name="Komp C."/>
            <person name="Kurdi O."/>
            <person name="Lashkari D."/>
            <person name="Lew H."/>
            <person name="Lin A."/>
            <person name="Lin D."/>
            <person name="Louis E.J."/>
            <person name="Marathe R."/>
            <person name="Messenguy F."/>
            <person name="Mewes H.-W."/>
            <person name="Mirtipati S."/>
            <person name="Moestl D."/>
            <person name="Mueller-Auer S."/>
            <person name="Namath A."/>
            <person name="Nentwich U."/>
            <person name="Oefner P."/>
            <person name="Pearson D."/>
            <person name="Petel F.X."/>
            <person name="Pohl T.M."/>
            <person name="Purnelle B."/>
            <person name="Rajandream M.A."/>
            <person name="Rechmann S."/>
            <person name="Rieger M."/>
            <person name="Riles L."/>
            <person name="Roberts D."/>
            <person name="Schaefer M."/>
            <person name="Scharfe M."/>
            <person name="Scherens B."/>
            <person name="Schramm S."/>
            <person name="Schroeder M."/>
            <person name="Sdicu A.-M."/>
            <person name="Tettelin H."/>
            <person name="Urrestarazu L.A."/>
            <person name="Ushinsky S."/>
            <person name="Vierendeels F."/>
            <person name="Vissers S."/>
            <person name="Voss H."/>
            <person name="Walsh S.V."/>
            <person name="Wambutt R."/>
            <person name="Wang Y."/>
            <person name="Wedler E."/>
            <person name="Wedler H."/>
            <person name="Winnett E."/>
            <person name="Zhong W.-W."/>
            <person name="Zollner A."/>
            <person name="Vo D.H."/>
            <person name="Hani J."/>
        </authorList>
    </citation>
    <scope>NUCLEOTIDE SEQUENCE [LARGE SCALE GENOMIC DNA]</scope>
    <source>
        <strain>ATCC 204508 / S288c</strain>
    </source>
</reference>
<reference key="2">
    <citation type="journal article" date="2014" name="G3 (Bethesda)">
        <title>The reference genome sequence of Saccharomyces cerevisiae: Then and now.</title>
        <authorList>
            <person name="Engel S.R."/>
            <person name="Dietrich F.S."/>
            <person name="Fisk D.G."/>
            <person name="Binkley G."/>
            <person name="Balakrishnan R."/>
            <person name="Costanzo M.C."/>
            <person name="Dwight S.S."/>
            <person name="Hitz B.C."/>
            <person name="Karra K."/>
            <person name="Nash R.S."/>
            <person name="Weng S."/>
            <person name="Wong E.D."/>
            <person name="Lloyd P."/>
            <person name="Skrzypek M.S."/>
            <person name="Miyasato S.R."/>
            <person name="Simison M."/>
            <person name="Cherry J.M."/>
        </authorList>
    </citation>
    <scope>GENOME REANNOTATION</scope>
    <source>
        <strain>ATCC 204508 / S288c</strain>
    </source>
</reference>
<reference key="3">
    <citation type="submission" date="2004-02" db="EMBL/GenBank/DDBJ databases">
        <authorList>
            <person name="Marsischky G."/>
            <person name="Rolfs A."/>
            <person name="Richardson A."/>
            <person name="Kane M."/>
            <person name="Baqui M."/>
            <person name="Taycher E."/>
            <person name="Hu Y."/>
            <person name="Vannberg F."/>
            <person name="Weger J."/>
            <person name="Kramer J."/>
            <person name="Moreira D."/>
            <person name="Kelley F."/>
            <person name="Zuo D."/>
            <person name="Raphael J."/>
            <person name="Hogle C."/>
            <person name="Jepson D."/>
            <person name="Williamson J."/>
            <person name="Camargo A."/>
            <person name="Gonzaga L."/>
            <person name="Vasconcelos A.T."/>
            <person name="Simpson A.J.G."/>
            <person name="Kolodner R."/>
            <person name="Harlow E."/>
            <person name="LaBaer J."/>
        </authorList>
    </citation>
    <scope>NUCLEOTIDE SEQUENCE [GENOMIC DNA]</scope>
    <source>
        <strain>ATCC 204508 / S288c</strain>
    </source>
</reference>
<reference key="4">
    <citation type="journal article" date="1997" name="Genetics">
        <title>Large scale identification of genes involved in cell surface biosynthesis and architecture in Saccharomyces cerevisiae.</title>
        <authorList>
            <person name="Lussier M."/>
            <person name="White A.-M."/>
            <person name="Sheraton J."/>
            <person name="di Paolo T."/>
            <person name="Treadwell J."/>
            <person name="Southard S.B."/>
            <person name="Horenstein C.I."/>
            <person name="Chen-Weiner J."/>
            <person name="Ram A.F.J."/>
            <person name="Kapteyn J.C."/>
            <person name="Roemer T.W."/>
            <person name="Vo D.H."/>
            <person name="Bondoc D.C."/>
            <person name="Hall J."/>
            <person name="Zhong W.-W."/>
            <person name="Sdicu A.-M."/>
            <person name="Davies J."/>
            <person name="Klis F.M."/>
            <person name="Robbins P.W."/>
            <person name="Bussey H."/>
        </authorList>
    </citation>
    <scope>IDENTIFICATION</scope>
</reference>
<reference key="5">
    <citation type="journal article" date="2002" name="Arch. Microbiol.">
        <title>The SRD2 gene is involved in Saccharomyces cerevisiae morphogenesis.</title>
        <authorList>
            <person name="Canizares J.V."/>
            <person name="Pallotti C."/>
            <person name="Sainz-Pardo I."/>
            <person name="Iranzo M."/>
            <person name="Mormeneo S."/>
        </authorList>
    </citation>
    <scope>FUNCTION</scope>
</reference>
<reference key="6">
    <citation type="journal article" date="2007" name="Mol. Cell. Biol.">
        <title>Role of transcription factor Kar4 in regulating downstream events in the Saccharomyces cerevisiae pheromone response pathway.</title>
        <authorList>
            <person name="Lahav R."/>
            <person name="Gammie A."/>
            <person name="Tavazoie S."/>
            <person name="Rose M.D."/>
        </authorList>
    </citation>
    <scope>INDUCTION</scope>
</reference>
<keyword id="KW-0961">Cell wall biogenesis/degradation</keyword>
<keyword id="KW-0479">Metal-binding</keyword>
<keyword id="KW-1185">Reference proteome</keyword>
<keyword id="KW-0862">Zinc</keyword>
<keyword id="KW-0863">Zinc-finger</keyword>
<name>ECM23_YEAST</name>
<sequence>MLYNKEQGTSGASSSGRRTKFHFDRFVQMVLFIAANPNYCCSVASIPKSGVTPDLKRADILEQKIKSLNSALSPKLKEESRLGGPLHNPSILPAPSFSSLPISSNGKKSLAGYRPKSRKKQTILPNGQPKECATCGDTWTSQWRSGPNGNVELCSRCGIAYRKKMEKKIRSQQSSDDGTKNFIFKNK</sequence>
<dbReference type="EMBL" id="U36624">
    <property type="protein sequence ID" value="AAB68166.1"/>
    <property type="molecule type" value="Genomic_DNA"/>
</dbReference>
<dbReference type="EMBL" id="AY558439">
    <property type="protein sequence ID" value="AAS56765.1"/>
    <property type="molecule type" value="Genomic_DNA"/>
</dbReference>
<dbReference type="EMBL" id="BK006949">
    <property type="protein sequence ID" value="DAA11407.1"/>
    <property type="molecule type" value="Genomic_DNA"/>
</dbReference>
<dbReference type="PIR" id="S63461">
    <property type="entry name" value="S63461"/>
</dbReference>
<dbReference type="RefSeq" id="NP_015304.1">
    <property type="nucleotide sequence ID" value="NM_001183835.1"/>
</dbReference>
<dbReference type="SMR" id="Q02710"/>
<dbReference type="BioGRID" id="36156">
    <property type="interactions" value="90"/>
</dbReference>
<dbReference type="FunCoup" id="Q02710">
    <property type="interactions" value="42"/>
</dbReference>
<dbReference type="STRING" id="4932.YPL021W"/>
<dbReference type="iPTMnet" id="Q02710"/>
<dbReference type="PaxDb" id="4932-YPL021W"/>
<dbReference type="EnsemblFungi" id="YPL021W_mRNA">
    <property type="protein sequence ID" value="YPL021W"/>
    <property type="gene ID" value="YPL021W"/>
</dbReference>
<dbReference type="GeneID" id="856086"/>
<dbReference type="KEGG" id="sce:YPL021W"/>
<dbReference type="AGR" id="SGD:S000005942"/>
<dbReference type="SGD" id="S000005942">
    <property type="gene designation" value="ECM23"/>
</dbReference>
<dbReference type="VEuPathDB" id="FungiDB:YPL021W"/>
<dbReference type="eggNOG" id="KOG1601">
    <property type="taxonomic scope" value="Eukaryota"/>
</dbReference>
<dbReference type="GeneTree" id="ENSGT00940000181677"/>
<dbReference type="HOGENOM" id="CLU_1533773_0_0_1"/>
<dbReference type="InParanoid" id="Q02710"/>
<dbReference type="OMA" id="ANPNYCC"/>
<dbReference type="OrthoDB" id="4044625at2759"/>
<dbReference type="BioCyc" id="YEAST:G3O-33939-MONOMER"/>
<dbReference type="BioGRID-ORCS" id="856086">
    <property type="hits" value="0 hits in 13 CRISPR screens"/>
</dbReference>
<dbReference type="PRO" id="PR:Q02710"/>
<dbReference type="Proteomes" id="UP000002311">
    <property type="component" value="Chromosome XVI"/>
</dbReference>
<dbReference type="RNAct" id="Q02710">
    <property type="molecule type" value="protein"/>
</dbReference>
<dbReference type="GO" id="GO:0043565">
    <property type="term" value="F:sequence-specific DNA binding"/>
    <property type="evidence" value="ECO:0000314"/>
    <property type="project" value="SGD"/>
</dbReference>
<dbReference type="GO" id="GO:0008270">
    <property type="term" value="F:zinc ion binding"/>
    <property type="evidence" value="ECO:0007669"/>
    <property type="project" value="UniProtKB-KW"/>
</dbReference>
<dbReference type="GO" id="GO:0071555">
    <property type="term" value="P:cell wall organization"/>
    <property type="evidence" value="ECO:0007669"/>
    <property type="project" value="UniProtKB-KW"/>
</dbReference>
<dbReference type="GO" id="GO:0007124">
    <property type="term" value="P:pseudohyphal growth"/>
    <property type="evidence" value="ECO:0000315"/>
    <property type="project" value="SGD"/>
</dbReference>
<dbReference type="GO" id="GO:0006355">
    <property type="term" value="P:regulation of DNA-templated transcription"/>
    <property type="evidence" value="ECO:0007669"/>
    <property type="project" value="InterPro"/>
</dbReference>
<dbReference type="FunFam" id="3.30.50.10:FF:000046">
    <property type="entry name" value="Gat4p"/>
    <property type="match status" value="1"/>
</dbReference>
<dbReference type="Gene3D" id="3.30.50.10">
    <property type="entry name" value="Erythroid Transcription Factor GATA-1, subunit A"/>
    <property type="match status" value="1"/>
</dbReference>
<dbReference type="InterPro" id="IPR000679">
    <property type="entry name" value="Znf_GATA"/>
</dbReference>
<dbReference type="InterPro" id="IPR013088">
    <property type="entry name" value="Znf_NHR/GATA"/>
</dbReference>
<dbReference type="Pfam" id="PF00320">
    <property type="entry name" value="GATA"/>
    <property type="match status" value="1"/>
</dbReference>
<dbReference type="SMART" id="SM00401">
    <property type="entry name" value="ZnF_GATA"/>
    <property type="match status" value="1"/>
</dbReference>
<dbReference type="SUPFAM" id="SSF57716">
    <property type="entry name" value="Glucocorticoid receptor-like (DNA-binding domain)"/>
    <property type="match status" value="1"/>
</dbReference>
<dbReference type="PROSITE" id="PS00344">
    <property type="entry name" value="GATA_ZN_FINGER_1"/>
    <property type="match status" value="1"/>
</dbReference>
<dbReference type="PROSITE" id="PS50114">
    <property type="entry name" value="GATA_ZN_FINGER_2"/>
    <property type="match status" value="1"/>
</dbReference>
<organism>
    <name type="scientific">Saccharomyces cerevisiae (strain ATCC 204508 / S288c)</name>
    <name type="common">Baker's yeast</name>
    <dbReference type="NCBI Taxonomy" id="559292"/>
    <lineage>
        <taxon>Eukaryota</taxon>
        <taxon>Fungi</taxon>
        <taxon>Dikarya</taxon>
        <taxon>Ascomycota</taxon>
        <taxon>Saccharomycotina</taxon>
        <taxon>Saccharomycetes</taxon>
        <taxon>Saccharomycetales</taxon>
        <taxon>Saccharomycetaceae</taxon>
        <taxon>Saccharomyces</taxon>
    </lineage>
</organism>
<feature type="chain" id="PRO_0000083483" description="Protein ECM23">
    <location>
        <begin position="1"/>
        <end position="187"/>
    </location>
</feature>
<feature type="zinc finger region" description="GATA-type" evidence="1">
    <location>
        <begin position="126"/>
        <end position="180"/>
    </location>
</feature>
<feature type="region of interest" description="Disordered" evidence="2">
    <location>
        <begin position="106"/>
        <end position="127"/>
    </location>
</feature>
<feature type="region of interest" description="Disordered" evidence="2">
    <location>
        <begin position="167"/>
        <end position="187"/>
    </location>
</feature>
<gene>
    <name type="primary">ECM23</name>
    <name type="synonym">SRD2</name>
    <name type="ordered locus">YPL021W</name>
</gene>
<accession>Q02710</accession>
<accession>D6W3Z1</accession>